<gene>
    <name evidence="1" type="primary">ahcY</name>
    <name type="ordered locus">LBL_4105</name>
</gene>
<accession>Q04WX0</accession>
<proteinExistence type="inferred from homology"/>
<sequence>MSATTQEKGLNYKVKDLSQAEWGRQEIILAEKEMPGLMALRQEYKGKKPLAGARIAGSLHMTIQTAVLIETLTELGAEVRWSSCNIFSTQDHAAAAIAKAGVPVFAWKGETEEEYWWCIEQTLFFGDKGPNMILDDGGDLTAYVHEKYPKLLSEIRGISEETTTGVKSLYKLLKKGELKVPAFNVNDSVTKSKFDNLYGCRESLADGIKRATDVMLAGKVALVCGFGDVGKGSAASLRNFGARVIVTEIDPICALQASMEGYQVLRVEDIIEQVDIVVTATGNDDIITLEHMKAMKDGAILCNIGHFDTEIQMSRLNSEKGVTKKEIKPQVDKYTFPDGKSIVVLAEGRLVNLGCATGHPSFVMSCSFTNQVLAQIELYNNKYELGVYTLPKHLDEKVAALHLEQLGVRLTKLNQKQADYLGVPLNGPFKPENYRY</sequence>
<organism>
    <name type="scientific">Leptospira borgpetersenii serovar Hardjo-bovis (strain L550)</name>
    <dbReference type="NCBI Taxonomy" id="355276"/>
    <lineage>
        <taxon>Bacteria</taxon>
        <taxon>Pseudomonadati</taxon>
        <taxon>Spirochaetota</taxon>
        <taxon>Spirochaetia</taxon>
        <taxon>Leptospirales</taxon>
        <taxon>Leptospiraceae</taxon>
        <taxon>Leptospira</taxon>
    </lineage>
</organism>
<reference key="1">
    <citation type="journal article" date="2006" name="Proc. Natl. Acad. Sci. U.S.A.">
        <title>Genome reduction in Leptospira borgpetersenii reflects limited transmission potential.</title>
        <authorList>
            <person name="Bulach D.M."/>
            <person name="Zuerner R.L."/>
            <person name="Wilson P."/>
            <person name="Seemann T."/>
            <person name="McGrath A."/>
            <person name="Cullen P.A."/>
            <person name="Davis J."/>
            <person name="Johnson M."/>
            <person name="Kuczek E."/>
            <person name="Alt D.P."/>
            <person name="Peterson-Burch B."/>
            <person name="Coppel R.L."/>
            <person name="Rood J.I."/>
            <person name="Davies J.K."/>
            <person name="Adler B."/>
        </authorList>
    </citation>
    <scope>NUCLEOTIDE SEQUENCE [LARGE SCALE GENOMIC DNA]</scope>
    <source>
        <strain>L550</strain>
    </source>
</reference>
<name>SAHH_LEPBL</name>
<comment type="function">
    <text evidence="1">May play a key role in the regulation of the intracellular concentration of adenosylhomocysteine.</text>
</comment>
<comment type="catalytic activity">
    <reaction evidence="1">
        <text>S-adenosyl-L-homocysteine + H2O = L-homocysteine + adenosine</text>
        <dbReference type="Rhea" id="RHEA:21708"/>
        <dbReference type="ChEBI" id="CHEBI:15377"/>
        <dbReference type="ChEBI" id="CHEBI:16335"/>
        <dbReference type="ChEBI" id="CHEBI:57856"/>
        <dbReference type="ChEBI" id="CHEBI:58199"/>
        <dbReference type="EC" id="3.13.2.1"/>
    </reaction>
</comment>
<comment type="cofactor">
    <cofactor evidence="1">
        <name>NAD(+)</name>
        <dbReference type="ChEBI" id="CHEBI:57540"/>
    </cofactor>
    <text evidence="1">Binds 1 NAD(+) per subunit.</text>
</comment>
<comment type="pathway">
    <text evidence="1">Amino-acid biosynthesis; L-homocysteine biosynthesis; L-homocysteine from S-adenosyl-L-homocysteine: step 1/1.</text>
</comment>
<comment type="subcellular location">
    <subcellularLocation>
        <location evidence="1">Cytoplasm</location>
    </subcellularLocation>
</comment>
<comment type="similarity">
    <text evidence="1">Belongs to the adenosylhomocysteinase family.</text>
</comment>
<dbReference type="EC" id="3.13.2.1" evidence="1"/>
<dbReference type="EMBL" id="CP000349">
    <property type="protein sequence ID" value="ABJ80425.1"/>
    <property type="molecule type" value="Genomic_DNA"/>
</dbReference>
<dbReference type="RefSeq" id="WP_002756526.1">
    <property type="nucleotide sequence ID" value="NC_008509.1"/>
</dbReference>
<dbReference type="SMR" id="Q04WX0"/>
<dbReference type="KEGG" id="lbl:LBL_4105"/>
<dbReference type="HOGENOM" id="CLU_025194_2_1_12"/>
<dbReference type="UniPathway" id="UPA00314">
    <property type="reaction ID" value="UER00076"/>
</dbReference>
<dbReference type="GO" id="GO:0005829">
    <property type="term" value="C:cytosol"/>
    <property type="evidence" value="ECO:0007669"/>
    <property type="project" value="TreeGrafter"/>
</dbReference>
<dbReference type="GO" id="GO:0004013">
    <property type="term" value="F:adenosylhomocysteinase activity"/>
    <property type="evidence" value="ECO:0007669"/>
    <property type="project" value="UniProtKB-UniRule"/>
</dbReference>
<dbReference type="GO" id="GO:0071269">
    <property type="term" value="P:L-homocysteine biosynthetic process"/>
    <property type="evidence" value="ECO:0007669"/>
    <property type="project" value="UniProtKB-UniRule"/>
</dbReference>
<dbReference type="GO" id="GO:0006730">
    <property type="term" value="P:one-carbon metabolic process"/>
    <property type="evidence" value="ECO:0007669"/>
    <property type="project" value="UniProtKB-KW"/>
</dbReference>
<dbReference type="GO" id="GO:0033353">
    <property type="term" value="P:S-adenosylmethionine cycle"/>
    <property type="evidence" value="ECO:0007669"/>
    <property type="project" value="TreeGrafter"/>
</dbReference>
<dbReference type="CDD" id="cd00401">
    <property type="entry name" value="SAHH"/>
    <property type="match status" value="1"/>
</dbReference>
<dbReference type="FunFam" id="3.40.50.1480:FF:000004">
    <property type="entry name" value="Adenosylhomocysteinase"/>
    <property type="match status" value="1"/>
</dbReference>
<dbReference type="FunFam" id="3.40.50.720:FF:000004">
    <property type="entry name" value="Adenosylhomocysteinase"/>
    <property type="match status" value="1"/>
</dbReference>
<dbReference type="Gene3D" id="3.40.50.1480">
    <property type="entry name" value="Adenosylhomocysteinase-like"/>
    <property type="match status" value="3"/>
</dbReference>
<dbReference type="Gene3D" id="3.40.50.720">
    <property type="entry name" value="NAD(P)-binding Rossmann-like Domain"/>
    <property type="match status" value="1"/>
</dbReference>
<dbReference type="HAMAP" id="MF_00563">
    <property type="entry name" value="AdoHcyase"/>
    <property type="match status" value="1"/>
</dbReference>
<dbReference type="InterPro" id="IPR042172">
    <property type="entry name" value="Adenosylhomocyst_ase-like_sf"/>
</dbReference>
<dbReference type="InterPro" id="IPR000043">
    <property type="entry name" value="Adenosylhomocysteinase-like"/>
</dbReference>
<dbReference type="InterPro" id="IPR015878">
    <property type="entry name" value="Ado_hCys_hydrolase_NAD-bd"/>
</dbReference>
<dbReference type="InterPro" id="IPR036291">
    <property type="entry name" value="NAD(P)-bd_dom_sf"/>
</dbReference>
<dbReference type="InterPro" id="IPR020082">
    <property type="entry name" value="S-Ado-L-homoCys_hydrolase_CS"/>
</dbReference>
<dbReference type="NCBIfam" id="TIGR00936">
    <property type="entry name" value="ahcY"/>
    <property type="match status" value="1"/>
</dbReference>
<dbReference type="NCBIfam" id="NF004005">
    <property type="entry name" value="PRK05476.2-3"/>
    <property type="match status" value="1"/>
</dbReference>
<dbReference type="PANTHER" id="PTHR23420">
    <property type="entry name" value="ADENOSYLHOMOCYSTEINASE"/>
    <property type="match status" value="1"/>
</dbReference>
<dbReference type="PANTHER" id="PTHR23420:SF0">
    <property type="entry name" value="ADENOSYLHOMOCYSTEINASE"/>
    <property type="match status" value="1"/>
</dbReference>
<dbReference type="Pfam" id="PF05221">
    <property type="entry name" value="AdoHcyase"/>
    <property type="match status" value="1"/>
</dbReference>
<dbReference type="Pfam" id="PF00670">
    <property type="entry name" value="AdoHcyase_NAD"/>
    <property type="match status" value="1"/>
</dbReference>
<dbReference type="PIRSF" id="PIRSF001109">
    <property type="entry name" value="Ad_hcy_hydrolase"/>
    <property type="match status" value="1"/>
</dbReference>
<dbReference type="SMART" id="SM00996">
    <property type="entry name" value="AdoHcyase"/>
    <property type="match status" value="1"/>
</dbReference>
<dbReference type="SMART" id="SM00997">
    <property type="entry name" value="AdoHcyase_NAD"/>
    <property type="match status" value="1"/>
</dbReference>
<dbReference type="SUPFAM" id="SSF52283">
    <property type="entry name" value="Formate/glycerate dehydrogenase catalytic domain-like"/>
    <property type="match status" value="1"/>
</dbReference>
<dbReference type="SUPFAM" id="SSF51735">
    <property type="entry name" value="NAD(P)-binding Rossmann-fold domains"/>
    <property type="match status" value="1"/>
</dbReference>
<dbReference type="PROSITE" id="PS00738">
    <property type="entry name" value="ADOHCYASE_1"/>
    <property type="match status" value="1"/>
</dbReference>
<dbReference type="PROSITE" id="PS00739">
    <property type="entry name" value="ADOHCYASE_2"/>
    <property type="match status" value="1"/>
</dbReference>
<feature type="chain" id="PRO_1000024730" description="Adenosylhomocysteinase">
    <location>
        <begin position="1"/>
        <end position="436"/>
    </location>
</feature>
<feature type="binding site" evidence="1">
    <location>
        <position position="62"/>
    </location>
    <ligand>
        <name>substrate</name>
    </ligand>
</feature>
<feature type="binding site" evidence="1">
    <location>
        <position position="136"/>
    </location>
    <ligand>
        <name>substrate</name>
    </ligand>
</feature>
<feature type="binding site" evidence="1">
    <location>
        <position position="161"/>
    </location>
    <ligand>
        <name>substrate</name>
    </ligand>
</feature>
<feature type="binding site" evidence="1">
    <location>
        <begin position="162"/>
        <end position="164"/>
    </location>
    <ligand>
        <name>NAD(+)</name>
        <dbReference type="ChEBI" id="CHEBI:57540"/>
    </ligand>
</feature>
<feature type="binding site" evidence="1">
    <location>
        <position position="191"/>
    </location>
    <ligand>
        <name>substrate</name>
    </ligand>
</feature>
<feature type="binding site" evidence="1">
    <location>
        <position position="195"/>
    </location>
    <ligand>
        <name>substrate</name>
    </ligand>
</feature>
<feature type="binding site" evidence="1">
    <location>
        <position position="196"/>
    </location>
    <ligand>
        <name>NAD(+)</name>
        <dbReference type="ChEBI" id="CHEBI:57540"/>
    </ligand>
</feature>
<feature type="binding site" evidence="1">
    <location>
        <begin position="225"/>
        <end position="230"/>
    </location>
    <ligand>
        <name>NAD(+)</name>
        <dbReference type="ChEBI" id="CHEBI:57540"/>
    </ligand>
</feature>
<feature type="binding site" evidence="1">
    <location>
        <position position="248"/>
    </location>
    <ligand>
        <name>NAD(+)</name>
        <dbReference type="ChEBI" id="CHEBI:57540"/>
    </ligand>
</feature>
<feature type="binding site" evidence="1">
    <location>
        <position position="283"/>
    </location>
    <ligand>
        <name>NAD(+)</name>
        <dbReference type="ChEBI" id="CHEBI:57540"/>
    </ligand>
</feature>
<feature type="binding site" evidence="1">
    <location>
        <begin position="304"/>
        <end position="306"/>
    </location>
    <ligand>
        <name>NAD(+)</name>
        <dbReference type="ChEBI" id="CHEBI:57540"/>
    </ligand>
</feature>
<feature type="binding site" evidence="1">
    <location>
        <position position="352"/>
    </location>
    <ligand>
        <name>NAD(+)</name>
        <dbReference type="ChEBI" id="CHEBI:57540"/>
    </ligand>
</feature>
<evidence type="ECO:0000255" key="1">
    <source>
        <dbReference type="HAMAP-Rule" id="MF_00563"/>
    </source>
</evidence>
<protein>
    <recommendedName>
        <fullName evidence="1">Adenosylhomocysteinase</fullName>
        <ecNumber evidence="1">3.13.2.1</ecNumber>
    </recommendedName>
    <alternativeName>
        <fullName evidence="1">S-adenosyl-L-homocysteine hydrolase</fullName>
        <shortName evidence="1">AdoHcyase</shortName>
    </alternativeName>
</protein>
<keyword id="KW-0963">Cytoplasm</keyword>
<keyword id="KW-0378">Hydrolase</keyword>
<keyword id="KW-0520">NAD</keyword>
<keyword id="KW-0554">One-carbon metabolism</keyword>